<gene>
    <name evidence="1" type="primary">leuC</name>
    <name type="ordered locus">Pars_2057</name>
</gene>
<reference key="1">
    <citation type="submission" date="2007-04" db="EMBL/GenBank/DDBJ databases">
        <title>Complete sequence of Pyrobaculum arsenaticum DSM 13514.</title>
        <authorList>
            <consortium name="US DOE Joint Genome Institute"/>
            <person name="Copeland A."/>
            <person name="Lucas S."/>
            <person name="Lapidus A."/>
            <person name="Barry K."/>
            <person name="Glavina del Rio T."/>
            <person name="Dalin E."/>
            <person name="Tice H."/>
            <person name="Pitluck S."/>
            <person name="Chain P."/>
            <person name="Malfatti S."/>
            <person name="Shin M."/>
            <person name="Vergez L."/>
            <person name="Schmutz J."/>
            <person name="Larimer F."/>
            <person name="Land M."/>
            <person name="Hauser L."/>
            <person name="Kyrpides N."/>
            <person name="Mikhailova N."/>
            <person name="Cozen A.E."/>
            <person name="Fitz-Gibbon S.T."/>
            <person name="House C.H."/>
            <person name="Saltikov C."/>
            <person name="Lowe T.M."/>
            <person name="Richardson P."/>
        </authorList>
    </citation>
    <scope>NUCLEOTIDE SEQUENCE [LARGE SCALE GENOMIC DNA]</scope>
    <source>
        <strain>ATCC 700994 / DSM 13514 / JCM 11321 / PZ6</strain>
    </source>
</reference>
<name>LEUC_PYRAR</name>
<organism>
    <name type="scientific">Pyrobaculum arsenaticum (strain DSM 13514 / JCM 11321 / PZ6)</name>
    <dbReference type="NCBI Taxonomy" id="340102"/>
    <lineage>
        <taxon>Archaea</taxon>
        <taxon>Thermoproteota</taxon>
        <taxon>Thermoprotei</taxon>
        <taxon>Thermoproteales</taxon>
        <taxon>Thermoproteaceae</taxon>
        <taxon>Pyrobaculum</taxon>
    </lineage>
</organism>
<accession>A4WMI6</accession>
<keyword id="KW-0004">4Fe-4S</keyword>
<keyword id="KW-0028">Amino-acid biosynthesis</keyword>
<keyword id="KW-0100">Branched-chain amino acid biosynthesis</keyword>
<keyword id="KW-0408">Iron</keyword>
<keyword id="KW-0411">Iron-sulfur</keyword>
<keyword id="KW-0432">Leucine biosynthesis</keyword>
<keyword id="KW-0456">Lyase</keyword>
<keyword id="KW-0479">Metal-binding</keyword>
<sequence length="415" mass="44771">MPTWTEHIFYKKTGRIPSPGDVVEVAPDLVGFHDLTGYHVLEVLEHMGKVEVFDNEKVVVAFDHLSPPPNQRAAEIMVYIRRHVKSLGLPHFFDVGGGILHQIILERYAMPGQVIFTADSHGNTAGAVGAFAHGMGATDIAAALKLGKTWLVVPAPFKVEVRGEFPPGVMGKDVALHLLGQFGAEGFNGYSVEVFVERPKVFPMDDRATVGNMSTEMGADALMFIPDAVTAEYLKTARGVDYTPPSLEPGNYADKYTVELGRLEPLVAAPHSVDNVKTVREVEGVEVDQVFIGSCTNGRLRDIATAARILKGRRVKTRCIAIPASYEVFKTAMKLGYIDVLTEAGCVVTYGTCGPCLGGHFGVAGPGEVHLTTSNRNFKGRVGHPEAKIYLANPAVAAATAAEGRIADPRPYLKH</sequence>
<dbReference type="EC" id="4.2.1.33" evidence="1"/>
<dbReference type="EMBL" id="CP000660">
    <property type="protein sequence ID" value="ABP51603.1"/>
    <property type="molecule type" value="Genomic_DNA"/>
</dbReference>
<dbReference type="RefSeq" id="WP_011901506.1">
    <property type="nucleotide sequence ID" value="NC_009376.1"/>
</dbReference>
<dbReference type="SMR" id="A4WMI6"/>
<dbReference type="STRING" id="340102.Pars_2057"/>
<dbReference type="GeneID" id="5054992"/>
<dbReference type="KEGG" id="pas:Pars_2057"/>
<dbReference type="HOGENOM" id="CLU_006714_3_4_2"/>
<dbReference type="OrthoDB" id="255at2157"/>
<dbReference type="PhylomeDB" id="A4WMI6"/>
<dbReference type="UniPathway" id="UPA00048">
    <property type="reaction ID" value="UER00071"/>
</dbReference>
<dbReference type="Proteomes" id="UP000001567">
    <property type="component" value="Chromosome"/>
</dbReference>
<dbReference type="GO" id="GO:0003861">
    <property type="term" value="F:3-isopropylmalate dehydratase activity"/>
    <property type="evidence" value="ECO:0007669"/>
    <property type="project" value="UniProtKB-UniRule"/>
</dbReference>
<dbReference type="GO" id="GO:0051539">
    <property type="term" value="F:4 iron, 4 sulfur cluster binding"/>
    <property type="evidence" value="ECO:0007669"/>
    <property type="project" value="UniProtKB-KW"/>
</dbReference>
<dbReference type="GO" id="GO:0046872">
    <property type="term" value="F:metal ion binding"/>
    <property type="evidence" value="ECO:0007669"/>
    <property type="project" value="UniProtKB-KW"/>
</dbReference>
<dbReference type="GO" id="GO:0009098">
    <property type="term" value="P:L-leucine biosynthetic process"/>
    <property type="evidence" value="ECO:0007669"/>
    <property type="project" value="UniProtKB-UniRule"/>
</dbReference>
<dbReference type="Gene3D" id="3.30.499.10">
    <property type="entry name" value="Aconitase, domain 3"/>
    <property type="match status" value="2"/>
</dbReference>
<dbReference type="HAMAP" id="MF_01027">
    <property type="entry name" value="LeuC_type2"/>
    <property type="match status" value="1"/>
</dbReference>
<dbReference type="InterPro" id="IPR015931">
    <property type="entry name" value="Acnase/IPM_dHydase_lsu_aba_1/3"/>
</dbReference>
<dbReference type="InterPro" id="IPR001030">
    <property type="entry name" value="Acoase/IPM_deHydtase_lsu_aba"/>
</dbReference>
<dbReference type="InterPro" id="IPR018136">
    <property type="entry name" value="Aconitase_4Fe-4S_BS"/>
</dbReference>
<dbReference type="InterPro" id="IPR036008">
    <property type="entry name" value="Aconitase_4Fe-4S_dom"/>
</dbReference>
<dbReference type="InterPro" id="IPR011826">
    <property type="entry name" value="HAcnase/IPMdehydase_lsu_prok"/>
</dbReference>
<dbReference type="InterPro" id="IPR006251">
    <property type="entry name" value="Homoacnase/IPMdehydase_lsu"/>
</dbReference>
<dbReference type="InterPro" id="IPR050067">
    <property type="entry name" value="IPM_dehydratase_rel_enz"/>
</dbReference>
<dbReference type="NCBIfam" id="TIGR01343">
    <property type="entry name" value="hacA_fam"/>
    <property type="match status" value="1"/>
</dbReference>
<dbReference type="NCBIfam" id="TIGR02086">
    <property type="entry name" value="IPMI_arch"/>
    <property type="match status" value="1"/>
</dbReference>
<dbReference type="NCBIfam" id="NF001614">
    <property type="entry name" value="PRK00402.1"/>
    <property type="match status" value="1"/>
</dbReference>
<dbReference type="PANTHER" id="PTHR43822:SF2">
    <property type="entry name" value="HOMOACONITASE, MITOCHONDRIAL"/>
    <property type="match status" value="1"/>
</dbReference>
<dbReference type="PANTHER" id="PTHR43822">
    <property type="entry name" value="HOMOACONITASE, MITOCHONDRIAL-RELATED"/>
    <property type="match status" value="1"/>
</dbReference>
<dbReference type="Pfam" id="PF00330">
    <property type="entry name" value="Aconitase"/>
    <property type="match status" value="2"/>
</dbReference>
<dbReference type="PRINTS" id="PR00415">
    <property type="entry name" value="ACONITASE"/>
</dbReference>
<dbReference type="SUPFAM" id="SSF53732">
    <property type="entry name" value="Aconitase iron-sulfur domain"/>
    <property type="match status" value="1"/>
</dbReference>
<dbReference type="PROSITE" id="PS00450">
    <property type="entry name" value="ACONITASE_1"/>
    <property type="match status" value="1"/>
</dbReference>
<dbReference type="PROSITE" id="PS01244">
    <property type="entry name" value="ACONITASE_2"/>
    <property type="match status" value="1"/>
</dbReference>
<comment type="function">
    <text evidence="1">Catalyzes the isomerization between 2-isopropylmalate and 3-isopropylmalate, via the formation of 2-isopropylmaleate.</text>
</comment>
<comment type="catalytic activity">
    <reaction evidence="1">
        <text>(2R,3S)-3-isopropylmalate = (2S)-2-isopropylmalate</text>
        <dbReference type="Rhea" id="RHEA:32287"/>
        <dbReference type="ChEBI" id="CHEBI:1178"/>
        <dbReference type="ChEBI" id="CHEBI:35121"/>
        <dbReference type="EC" id="4.2.1.33"/>
    </reaction>
</comment>
<comment type="cofactor">
    <cofactor evidence="1">
        <name>[4Fe-4S] cluster</name>
        <dbReference type="ChEBI" id="CHEBI:49883"/>
    </cofactor>
    <text evidence="1">Binds 1 [4Fe-4S] cluster per subunit.</text>
</comment>
<comment type="pathway">
    <text evidence="1">Amino-acid biosynthesis; L-leucine biosynthesis; L-leucine from 3-methyl-2-oxobutanoate: step 2/4.</text>
</comment>
<comment type="subunit">
    <text evidence="1">Heterodimer of LeuC and LeuD.</text>
</comment>
<comment type="similarity">
    <text evidence="1">Belongs to the aconitase/IPM isomerase family. LeuC type 2 subfamily.</text>
</comment>
<proteinExistence type="inferred from homology"/>
<protein>
    <recommendedName>
        <fullName evidence="1">3-isopropylmalate dehydratase large subunit</fullName>
        <ecNumber evidence="1">4.2.1.33</ecNumber>
    </recommendedName>
    <alternativeName>
        <fullName evidence="1">Alpha-IPM isomerase</fullName>
        <shortName evidence="1">IPMI</shortName>
    </alternativeName>
    <alternativeName>
        <fullName evidence="1">Isopropylmalate isomerase</fullName>
    </alternativeName>
</protein>
<evidence type="ECO:0000255" key="1">
    <source>
        <dbReference type="HAMAP-Rule" id="MF_01027"/>
    </source>
</evidence>
<feature type="chain" id="PRO_1000063652" description="3-isopropylmalate dehydratase large subunit">
    <location>
        <begin position="1"/>
        <end position="415"/>
    </location>
</feature>
<feature type="binding site" evidence="1">
    <location>
        <position position="295"/>
    </location>
    <ligand>
        <name>[4Fe-4S] cluster</name>
        <dbReference type="ChEBI" id="CHEBI:49883"/>
    </ligand>
</feature>
<feature type="binding site" evidence="1">
    <location>
        <position position="353"/>
    </location>
    <ligand>
        <name>[4Fe-4S] cluster</name>
        <dbReference type="ChEBI" id="CHEBI:49883"/>
    </ligand>
</feature>
<feature type="binding site" evidence="1">
    <location>
        <position position="356"/>
    </location>
    <ligand>
        <name>[4Fe-4S] cluster</name>
        <dbReference type="ChEBI" id="CHEBI:49883"/>
    </ligand>
</feature>